<comment type="function">
    <text evidence="3">Transcription factor that is a critical component of the regulatory circuit of the circadian clock. Binds to specific sites on CCA1 promoter leading to CCA1 activation. Is required for the rhythmic expression of other clock genes such as LHY, GI and APRR1/TOC1.</text>
</comment>
<comment type="subcellular location">
    <subcellularLocation>
        <location evidence="1 3">Nucleus</location>
    </subcellularLocation>
</comment>
<feature type="chain" id="PRO_0000422984" description="Transcription factor BOA">
    <location>
        <begin position="1"/>
        <end position="298"/>
    </location>
</feature>
<feature type="DNA-binding region" description="Myb-like GARP" evidence="1">
    <location>
        <begin position="138"/>
        <end position="197"/>
    </location>
</feature>
<feature type="region of interest" description="Disordered" evidence="2">
    <location>
        <begin position="1"/>
        <end position="26"/>
    </location>
</feature>
<feature type="region of interest" description="Disordered" evidence="2">
    <location>
        <begin position="79"/>
        <end position="143"/>
    </location>
</feature>
<feature type="region of interest" description="Disordered" evidence="2">
    <location>
        <begin position="206"/>
        <end position="232"/>
    </location>
</feature>
<feature type="compositionally biased region" description="Acidic residues" evidence="2">
    <location>
        <begin position="10"/>
        <end position="20"/>
    </location>
</feature>
<feature type="compositionally biased region" description="Basic and acidic residues" evidence="2">
    <location>
        <begin position="104"/>
        <end position="113"/>
    </location>
</feature>
<feature type="compositionally biased region" description="Acidic residues" evidence="2">
    <location>
        <begin position="122"/>
        <end position="131"/>
    </location>
</feature>
<feature type="compositionally biased region" description="Polar residues" evidence="2">
    <location>
        <begin position="209"/>
        <end position="227"/>
    </location>
</feature>
<feature type="sequence conflict" description="In Ref. 6; AAM65635." evidence="4" ref="6">
    <original>Y</original>
    <variation>S</variation>
    <location>
        <position position="45"/>
    </location>
</feature>
<feature type="sequence conflict" description="In Ref. 6; AAM65635." evidence="4" ref="6">
    <original>T</original>
    <variation>K</variation>
    <location>
        <position position="283"/>
    </location>
</feature>
<name>PCLL_ARATH</name>
<protein>
    <recommendedName>
        <fullName>Transcription factor BOA</fullName>
    </recommendedName>
    <alternativeName>
        <fullName>Protein BROTHER OF LUX ARRHYTHMO</fullName>
    </alternativeName>
    <alternativeName>
        <fullName>Protein PHYTOCLOCK 1-like</fullName>
        <shortName>Protein PCL1-like</shortName>
    </alternativeName>
</protein>
<dbReference type="EMBL" id="AB206577">
    <property type="protein sequence ID" value="BAE16278.1"/>
    <property type="molecule type" value="Genomic_DNA"/>
</dbReference>
<dbReference type="EMBL" id="AB025604">
    <property type="protein sequence ID" value="BAA97491.1"/>
    <property type="molecule type" value="Genomic_DNA"/>
</dbReference>
<dbReference type="EMBL" id="CP002688">
    <property type="protein sequence ID" value="AED97207.1"/>
    <property type="molecule type" value="Genomic_DNA"/>
</dbReference>
<dbReference type="EMBL" id="CP002688">
    <property type="protein sequence ID" value="ANM69715.1"/>
    <property type="molecule type" value="Genomic_DNA"/>
</dbReference>
<dbReference type="EMBL" id="AK117348">
    <property type="protein sequence ID" value="BAC42018.1"/>
    <property type="molecule type" value="mRNA"/>
</dbReference>
<dbReference type="EMBL" id="BT026065">
    <property type="protein sequence ID" value="ABG48421.1"/>
    <property type="molecule type" value="mRNA"/>
</dbReference>
<dbReference type="EMBL" id="AY088089">
    <property type="protein sequence ID" value="AAM65635.1"/>
    <property type="molecule type" value="mRNA"/>
</dbReference>
<dbReference type="RefSeq" id="NP_001331374.1">
    <property type="nucleotide sequence ID" value="NM_001345359.1"/>
</dbReference>
<dbReference type="RefSeq" id="NP_200765.1">
    <property type="nucleotide sequence ID" value="NM_125349.3"/>
</dbReference>
<dbReference type="SMR" id="Q9LTH4"/>
<dbReference type="BioGRID" id="21320">
    <property type="interactions" value="19"/>
</dbReference>
<dbReference type="FunCoup" id="Q9LTH4">
    <property type="interactions" value="216"/>
</dbReference>
<dbReference type="IntAct" id="Q9LTH4">
    <property type="interactions" value="18"/>
</dbReference>
<dbReference type="STRING" id="3702.Q9LTH4"/>
<dbReference type="PaxDb" id="3702-AT5G59570.1"/>
<dbReference type="ProteomicsDB" id="236335"/>
<dbReference type="EnsemblPlants" id="AT5G59570.1">
    <property type="protein sequence ID" value="AT5G59570.1"/>
    <property type="gene ID" value="AT5G59570"/>
</dbReference>
<dbReference type="EnsemblPlants" id="AT5G59570.2">
    <property type="protein sequence ID" value="AT5G59570.2"/>
    <property type="gene ID" value="AT5G59570"/>
</dbReference>
<dbReference type="GeneID" id="836076"/>
<dbReference type="Gramene" id="AT5G59570.1">
    <property type="protein sequence ID" value="AT5G59570.1"/>
    <property type="gene ID" value="AT5G59570"/>
</dbReference>
<dbReference type="Gramene" id="AT5G59570.2">
    <property type="protein sequence ID" value="AT5G59570.2"/>
    <property type="gene ID" value="AT5G59570"/>
</dbReference>
<dbReference type="KEGG" id="ath:AT5G59570"/>
<dbReference type="Araport" id="AT5G59570"/>
<dbReference type="TAIR" id="AT5G59570">
    <property type="gene designation" value="BOA"/>
</dbReference>
<dbReference type="eggNOG" id="ENOG502RIEW">
    <property type="taxonomic scope" value="Eukaryota"/>
</dbReference>
<dbReference type="HOGENOM" id="CLU_055357_1_0_1"/>
<dbReference type="InParanoid" id="Q9LTH4"/>
<dbReference type="OMA" id="ERSRTIH"/>
<dbReference type="PhylomeDB" id="Q9LTH4"/>
<dbReference type="PRO" id="PR:Q9LTH4"/>
<dbReference type="Proteomes" id="UP000006548">
    <property type="component" value="Chromosome 5"/>
</dbReference>
<dbReference type="ExpressionAtlas" id="Q9LTH4">
    <property type="expression patterns" value="baseline and differential"/>
</dbReference>
<dbReference type="GO" id="GO:0005634">
    <property type="term" value="C:nucleus"/>
    <property type="evidence" value="ECO:0000314"/>
    <property type="project" value="TAIR"/>
</dbReference>
<dbReference type="GO" id="GO:0003677">
    <property type="term" value="F:DNA binding"/>
    <property type="evidence" value="ECO:0007669"/>
    <property type="project" value="UniProtKB-KW"/>
</dbReference>
<dbReference type="GO" id="GO:0003700">
    <property type="term" value="F:DNA-binding transcription factor activity"/>
    <property type="evidence" value="ECO:0000314"/>
    <property type="project" value="TAIR"/>
</dbReference>
<dbReference type="GO" id="GO:0007623">
    <property type="term" value="P:circadian rhythm"/>
    <property type="evidence" value="ECO:0000315"/>
    <property type="project" value="TAIR"/>
</dbReference>
<dbReference type="GO" id="GO:0006355">
    <property type="term" value="P:regulation of DNA-templated transcription"/>
    <property type="evidence" value="ECO:0000304"/>
    <property type="project" value="TAIR"/>
</dbReference>
<dbReference type="GO" id="GO:0009909">
    <property type="term" value="P:regulation of flower development"/>
    <property type="evidence" value="ECO:0000315"/>
    <property type="project" value="TAIR"/>
</dbReference>
<dbReference type="FunFam" id="1.10.10.60:FF:000007">
    <property type="entry name" value="Two-component response regulator"/>
    <property type="match status" value="1"/>
</dbReference>
<dbReference type="Gene3D" id="1.10.10.60">
    <property type="entry name" value="Homeodomain-like"/>
    <property type="match status" value="1"/>
</dbReference>
<dbReference type="InterPro" id="IPR009057">
    <property type="entry name" value="Homeodomain-like_sf"/>
</dbReference>
<dbReference type="InterPro" id="IPR044841">
    <property type="entry name" value="LUX/BOA-like"/>
</dbReference>
<dbReference type="InterPro" id="IPR017930">
    <property type="entry name" value="Myb_dom"/>
</dbReference>
<dbReference type="InterPro" id="IPR006447">
    <property type="entry name" value="Myb_dom_plants"/>
</dbReference>
<dbReference type="InterPro" id="IPR001005">
    <property type="entry name" value="SANT/Myb"/>
</dbReference>
<dbReference type="NCBIfam" id="TIGR01557">
    <property type="entry name" value="myb_SHAQKYF"/>
    <property type="match status" value="1"/>
</dbReference>
<dbReference type="PANTHER" id="PTHR31442">
    <property type="entry name" value="HOMEODOMAIN-LIKE SUPERFAMILY PROTEIN-RELATED"/>
    <property type="match status" value="1"/>
</dbReference>
<dbReference type="PANTHER" id="PTHR31442:SF21">
    <property type="entry name" value="TRANSCRIPTION FACTOR BOA-RELATED"/>
    <property type="match status" value="1"/>
</dbReference>
<dbReference type="Pfam" id="PF00249">
    <property type="entry name" value="Myb_DNA-binding"/>
    <property type="match status" value="1"/>
</dbReference>
<dbReference type="SUPFAM" id="SSF46689">
    <property type="entry name" value="Homeodomain-like"/>
    <property type="match status" value="1"/>
</dbReference>
<dbReference type="PROSITE" id="PS51294">
    <property type="entry name" value="HTH_MYB"/>
    <property type="match status" value="1"/>
</dbReference>
<sequence>MGKEVMVSDYGDDDGEDAGGGDEYRIPEWEIGLPNGDDLTPLSQYLVPSILALAFSMIPERSRTIHDVNRASQITLSSLRSSTNASSVMEEVVDRVESSVPGSDPKKQKKSDGGEAAAVEDSTAEEGDSGPEDASGKTSKRPRLVWTPQLHKRFVDVVAHLGIKNAVPKTIMQLMNVEGLTRENVASHLQKYRLYLKRIQGLTTEEDPYSSSDQLFSSTPVPPQSFQDGGGSNGKLGVPVPVPSMVPIPGYGNQMGMQGYYQQYSNHGNESNQYMMQQNKFGTMVTYPSVGGGDVNDK</sequence>
<reference key="1">
    <citation type="journal article" date="2005" name="Genes Cells">
        <title>PHYTOCLOCK 1 encoding a novel GARP protein essential for the Arabidopsis circadian clock.</title>
        <authorList>
            <person name="Onai K."/>
            <person name="Ishiura M."/>
        </authorList>
    </citation>
    <scope>NUCLEOTIDE SEQUENCE [GENOMIC DNA]</scope>
    <source>
        <strain>cv. Columbia</strain>
    </source>
</reference>
<reference key="2">
    <citation type="submission" date="1999-04" db="EMBL/GenBank/DDBJ databases">
        <title>Structural analysis of Arabidopsis thaliana chromosome 5. XI.</title>
        <authorList>
            <person name="Kaneko T."/>
            <person name="Katoh T."/>
            <person name="Asamizu E."/>
            <person name="Sato S."/>
            <person name="Nakamura Y."/>
            <person name="Kotani H."/>
            <person name="Tabata S."/>
        </authorList>
    </citation>
    <scope>NUCLEOTIDE SEQUENCE [LARGE SCALE GENOMIC DNA]</scope>
    <source>
        <strain>cv. Columbia</strain>
    </source>
</reference>
<reference key="3">
    <citation type="journal article" date="2017" name="Plant J.">
        <title>Araport11: a complete reannotation of the Arabidopsis thaliana reference genome.</title>
        <authorList>
            <person name="Cheng C.Y."/>
            <person name="Krishnakumar V."/>
            <person name="Chan A.P."/>
            <person name="Thibaud-Nissen F."/>
            <person name="Schobel S."/>
            <person name="Town C.D."/>
        </authorList>
    </citation>
    <scope>GENOME REANNOTATION</scope>
    <source>
        <strain>cv. Columbia</strain>
    </source>
</reference>
<reference key="4">
    <citation type="journal article" date="2002" name="Science">
        <title>Functional annotation of a full-length Arabidopsis cDNA collection.</title>
        <authorList>
            <person name="Seki M."/>
            <person name="Narusaka M."/>
            <person name="Kamiya A."/>
            <person name="Ishida J."/>
            <person name="Satou M."/>
            <person name="Sakurai T."/>
            <person name="Nakajima M."/>
            <person name="Enju A."/>
            <person name="Akiyama K."/>
            <person name="Oono Y."/>
            <person name="Muramatsu M."/>
            <person name="Hayashizaki Y."/>
            <person name="Kawai J."/>
            <person name="Carninci P."/>
            <person name="Itoh M."/>
            <person name="Ishii Y."/>
            <person name="Arakawa T."/>
            <person name="Shibata K."/>
            <person name="Shinagawa A."/>
            <person name="Shinozaki K."/>
        </authorList>
    </citation>
    <scope>NUCLEOTIDE SEQUENCE [LARGE SCALE MRNA]</scope>
    <source>
        <strain>cv. Columbia</strain>
    </source>
</reference>
<reference key="5">
    <citation type="submission" date="2006-07" db="EMBL/GenBank/DDBJ databases">
        <title>Arabidopsis ORF clones.</title>
        <authorList>
            <person name="Quinitio C."/>
            <person name="Chen H."/>
            <person name="Kim C.J."/>
            <person name="Shinn P."/>
            <person name="Ecker J.R."/>
        </authorList>
    </citation>
    <scope>NUCLEOTIDE SEQUENCE [LARGE SCALE MRNA]</scope>
    <source>
        <strain>cv. Columbia</strain>
    </source>
</reference>
<reference key="6">
    <citation type="submission" date="2002-03" db="EMBL/GenBank/DDBJ databases">
        <title>Full-length cDNA from Arabidopsis thaliana.</title>
        <authorList>
            <person name="Brover V.V."/>
            <person name="Troukhan M.E."/>
            <person name="Alexandrov N.A."/>
            <person name="Lu Y.-P."/>
            <person name="Flavell R.B."/>
            <person name="Feldmann K.A."/>
        </authorList>
    </citation>
    <scope>NUCLEOTIDE SEQUENCE [LARGE SCALE MRNA]</scope>
</reference>
<reference key="7">
    <citation type="journal article" date="2011" name="Plant Cell">
        <title>BROTHER OF LUX ARRHYTHMO is a component of the Arabidopsis circadian clock.</title>
        <authorList>
            <person name="Dai S."/>
            <person name="Wei X."/>
            <person name="Pei L."/>
            <person name="Thompson R.L."/>
            <person name="Liu Y."/>
            <person name="Heard J.E."/>
            <person name="Ruff T.G."/>
            <person name="Beachy R.N."/>
        </authorList>
    </citation>
    <scope>FUNCTION</scope>
    <scope>SUBCELLULAR LOCATION</scope>
    <scope>TISSUE SPECIFICITY</scope>
    <scope>INDUCTION</scope>
</reference>
<accession>Q9LTH4</accession>
<accession>Q8LA15</accession>
<gene>
    <name type="primary">BOA</name>
    <name type="synonym">PCLL</name>
    <name type="ordered locus">At5g59570</name>
    <name type="ORF">F2O15.230</name>
</gene>
<proteinExistence type="evidence at transcript level"/>
<evidence type="ECO:0000255" key="1">
    <source>
        <dbReference type="PROSITE-ProRule" id="PRU00625"/>
    </source>
</evidence>
<evidence type="ECO:0000256" key="2">
    <source>
        <dbReference type="SAM" id="MobiDB-lite"/>
    </source>
</evidence>
<evidence type="ECO:0000269" key="3">
    <source>
    </source>
</evidence>
<evidence type="ECO:0000305" key="4"/>
<keyword id="KW-0090">Biological rhythms</keyword>
<keyword id="KW-0238">DNA-binding</keyword>
<keyword id="KW-0539">Nucleus</keyword>
<keyword id="KW-1185">Reference proteome</keyword>
<keyword id="KW-0804">Transcription</keyword>
<keyword id="KW-0805">Transcription regulation</keyword>
<organism>
    <name type="scientific">Arabidopsis thaliana</name>
    <name type="common">Mouse-ear cress</name>
    <dbReference type="NCBI Taxonomy" id="3702"/>
    <lineage>
        <taxon>Eukaryota</taxon>
        <taxon>Viridiplantae</taxon>
        <taxon>Streptophyta</taxon>
        <taxon>Embryophyta</taxon>
        <taxon>Tracheophyta</taxon>
        <taxon>Spermatophyta</taxon>
        <taxon>Magnoliopsida</taxon>
        <taxon>eudicotyledons</taxon>
        <taxon>Gunneridae</taxon>
        <taxon>Pentapetalae</taxon>
        <taxon>rosids</taxon>
        <taxon>malvids</taxon>
        <taxon>Brassicales</taxon>
        <taxon>Brassicaceae</taxon>
        <taxon>Camelineae</taxon>
        <taxon>Arabidopsis</taxon>
    </lineage>
</organism>